<organism>
    <name type="scientific">Mus musculus</name>
    <name type="common">Mouse</name>
    <dbReference type="NCBI Taxonomy" id="10090"/>
    <lineage>
        <taxon>Eukaryota</taxon>
        <taxon>Metazoa</taxon>
        <taxon>Chordata</taxon>
        <taxon>Craniata</taxon>
        <taxon>Vertebrata</taxon>
        <taxon>Euteleostomi</taxon>
        <taxon>Mammalia</taxon>
        <taxon>Eutheria</taxon>
        <taxon>Euarchontoglires</taxon>
        <taxon>Glires</taxon>
        <taxon>Rodentia</taxon>
        <taxon>Myomorpha</taxon>
        <taxon>Muroidea</taxon>
        <taxon>Muridae</taxon>
        <taxon>Murinae</taxon>
        <taxon>Mus</taxon>
        <taxon>Mus</taxon>
    </lineage>
</organism>
<sequence>MSERQSAGATNGKDKTSGDNDGQKKVQEEFDIDMDAPETERAAVAIQSQFRKFQKKKAGSQS</sequence>
<accession>P63054</accession>
<accession>P07734</accession>
<accession>Q63890</accession>
<name>PCP4_MOUSE</name>
<dbReference type="EMBL" id="X17320">
    <property type="protein sequence ID" value="CAA35199.1"/>
    <property type="molecule type" value="mRNA"/>
</dbReference>
<dbReference type="EMBL" id="S65227">
    <property type="protein sequence ID" value="AAB28009.2"/>
    <property type="molecule type" value="Genomic_DNA"/>
</dbReference>
<dbReference type="EMBL" id="S65225">
    <property type="protein sequence ID" value="AAB28009.2"/>
    <property type="status" value="JOINED"/>
    <property type="molecule type" value="Genomic_DNA"/>
</dbReference>
<dbReference type="EMBL" id="S65226">
    <property type="protein sequence ID" value="AAB28009.2"/>
    <property type="status" value="JOINED"/>
    <property type="molecule type" value="Genomic_DNA"/>
</dbReference>
<dbReference type="EMBL" id="BC061164">
    <property type="protein sequence ID" value="AAH61164.1"/>
    <property type="molecule type" value="mRNA"/>
</dbReference>
<dbReference type="CCDS" id="CCDS37414.1"/>
<dbReference type="PIR" id="S14925">
    <property type="entry name" value="S14925"/>
</dbReference>
<dbReference type="RefSeq" id="NP_032817.1">
    <property type="nucleotide sequence ID" value="NM_008791.3"/>
</dbReference>
<dbReference type="SMR" id="P63054"/>
<dbReference type="FunCoup" id="P63054">
    <property type="interactions" value="59"/>
</dbReference>
<dbReference type="STRING" id="10090.ENSMUSP00000062539"/>
<dbReference type="iPTMnet" id="P63054"/>
<dbReference type="PhosphoSitePlus" id="P63054"/>
<dbReference type="PaxDb" id="10090-ENSMUSP00000062539"/>
<dbReference type="ProteomicsDB" id="288001"/>
<dbReference type="DNASU" id="18546"/>
<dbReference type="Ensembl" id="ENSMUST00000061739.9">
    <property type="protein sequence ID" value="ENSMUSP00000062539.9"/>
    <property type="gene ID" value="ENSMUSG00000090223.3"/>
</dbReference>
<dbReference type="GeneID" id="18546"/>
<dbReference type="KEGG" id="mmu:18546"/>
<dbReference type="UCSC" id="uc008adc.1">
    <property type="organism name" value="mouse"/>
</dbReference>
<dbReference type="AGR" id="MGI:97509"/>
<dbReference type="CTD" id="5121"/>
<dbReference type="MGI" id="MGI:97509">
    <property type="gene designation" value="Pcp4"/>
</dbReference>
<dbReference type="VEuPathDB" id="HostDB:ENSMUSG00000090223"/>
<dbReference type="eggNOG" id="ENOG502STZW">
    <property type="taxonomic scope" value="Eukaryota"/>
</dbReference>
<dbReference type="HOGENOM" id="CLU_202697_1_0_1"/>
<dbReference type="InParanoid" id="P63054"/>
<dbReference type="OMA" id="PHCEGQM"/>
<dbReference type="OrthoDB" id="91323at9989"/>
<dbReference type="PhylomeDB" id="P63054"/>
<dbReference type="TreeFam" id="TF336068"/>
<dbReference type="BioGRID-ORCS" id="18546">
    <property type="hits" value="3 hits in 75 CRISPR screens"/>
</dbReference>
<dbReference type="ChiTaRS" id="Pcp4">
    <property type="organism name" value="mouse"/>
</dbReference>
<dbReference type="PRO" id="PR:P63054"/>
<dbReference type="Proteomes" id="UP000000589">
    <property type="component" value="Chromosome 16"/>
</dbReference>
<dbReference type="RNAct" id="P63054">
    <property type="molecule type" value="protein"/>
</dbReference>
<dbReference type="Bgee" id="ENSMUSG00000090223">
    <property type="expression patterns" value="Expressed in striatum and 172 other cell types or tissues"/>
</dbReference>
<dbReference type="ExpressionAtlas" id="P63054">
    <property type="expression patterns" value="baseline and differential"/>
</dbReference>
<dbReference type="GO" id="GO:0032991">
    <property type="term" value="C:protein-containing complex"/>
    <property type="evidence" value="ECO:0007669"/>
    <property type="project" value="Ensembl"/>
</dbReference>
<dbReference type="GO" id="GO:0005509">
    <property type="term" value="F:calcium ion binding"/>
    <property type="evidence" value="ECO:0000250"/>
    <property type="project" value="UniProtKB"/>
</dbReference>
<dbReference type="GO" id="GO:0005516">
    <property type="term" value="F:calmodulin binding"/>
    <property type="evidence" value="ECO:0000314"/>
    <property type="project" value="MGI"/>
</dbReference>
<dbReference type="GO" id="GO:1905291">
    <property type="term" value="P:positive regulation of CAMKK-AMPK signaling cascade"/>
    <property type="evidence" value="ECO:0000250"/>
    <property type="project" value="UniProtKB"/>
</dbReference>
<dbReference type="GO" id="GO:0045666">
    <property type="term" value="P:positive regulation of neuron differentiation"/>
    <property type="evidence" value="ECO:0000250"/>
    <property type="project" value="UniProtKB"/>
</dbReference>
<dbReference type="InterPro" id="IPR052142">
    <property type="entry name" value="Calmodulin_Regulator_PCP4-like"/>
</dbReference>
<dbReference type="PANTHER" id="PTHR15359:SF7">
    <property type="entry name" value="CALMODULIN REGULATOR PROTEIN PCP4"/>
    <property type="match status" value="1"/>
</dbReference>
<dbReference type="PANTHER" id="PTHR15359">
    <property type="entry name" value="IG-LIKE DOMAIN-CONTAINING PROTEIN"/>
    <property type="match status" value="1"/>
</dbReference>
<feature type="chain" id="PRO_0000058307" description="Calmodulin regulator protein PCP4">
    <location>
        <begin position="1"/>
        <end position="62"/>
    </location>
</feature>
<feature type="domain" description="IQ" evidence="2">
    <location>
        <begin position="39"/>
        <end position="62"/>
    </location>
</feature>
<feature type="region of interest" description="Disordered" evidence="3">
    <location>
        <begin position="1"/>
        <end position="39"/>
    </location>
</feature>
<feature type="region of interest" description="Acidic; binds calcium and is required for modulating the calcium-binding kinetics of calmodulin" evidence="1">
    <location>
        <begin position="28"/>
        <end position="40"/>
    </location>
</feature>
<feature type="compositionally biased region" description="Basic and acidic residues" evidence="3">
    <location>
        <begin position="12"/>
        <end position="28"/>
    </location>
</feature>
<feature type="sequence conflict" description="In Ref. 2; AAB28009." evidence="6" ref="2">
    <original>E</original>
    <variation>Q</variation>
    <location>
        <position position="40"/>
    </location>
</feature>
<protein>
    <recommendedName>
        <fullName evidence="6">Calmodulin regulator protein PCP4</fullName>
    </recommendedName>
    <alternativeName>
        <fullName evidence="4">Brain-specific antigen PCP-4</fullName>
    </alternativeName>
    <alternativeName>
        <fullName evidence="5">Brain-specific polypeptide PEP-19</fullName>
    </alternativeName>
    <alternativeName>
        <fullName evidence="7">Purkinje cell protein 4</fullName>
    </alternativeName>
</protein>
<comment type="function">
    <text evidence="1">Functions as a modulator of calcium-binding by calmodulin. Thereby, regulates calmodulin activity and the different processes it controls. For instance, may play a role in neuronal differentiation through activation of calmodulin-dependent kinase signaling pathways.</text>
</comment>
<comment type="subunit">
    <text evidence="1">Binds to both calcium-free and calcium-bound calmodulin. The affinity for the calcium-bound form is 50-fold greater.</text>
</comment>
<comment type="domain">
    <text evidence="1">Mostly intrinsically disordered, with residual structure localized to the IQ domain which mediates the interaction with calmodulin.</text>
</comment>
<comment type="similarity">
    <text evidence="6">Belongs to the PCP4 family.</text>
</comment>
<evidence type="ECO:0000250" key="1">
    <source>
        <dbReference type="UniProtKB" id="P48539"/>
    </source>
</evidence>
<evidence type="ECO:0000255" key="2">
    <source>
        <dbReference type="PROSITE-ProRule" id="PRU00116"/>
    </source>
</evidence>
<evidence type="ECO:0000256" key="3">
    <source>
        <dbReference type="SAM" id="MobiDB-lite"/>
    </source>
</evidence>
<evidence type="ECO:0000303" key="4">
    <source>
    </source>
</evidence>
<evidence type="ECO:0000303" key="5">
    <source>
    </source>
</evidence>
<evidence type="ECO:0000305" key="6"/>
<evidence type="ECO:0000312" key="7">
    <source>
        <dbReference type="MGI" id="MGI:97509"/>
    </source>
</evidence>
<reference key="1">
    <citation type="journal article" date="1990" name="Nucleic Acids Res.">
        <title>Sequence of a murine cDNA, pcp-4, that encodes the homolog of the rat brain-specific antigen PEP-19.</title>
        <authorList>
            <person name="Chen S.L."/>
            <person name="Orr H.T."/>
        </authorList>
    </citation>
    <scope>NUCLEOTIDE SEQUENCE [MRNA]</scope>
    <source>
        <strain>C57BL/6J</strain>
        <tissue>Cerebellum</tissue>
    </source>
</reference>
<reference key="2">
    <citation type="journal article" date="1993" name="Brain Res. Mol. Brain Res.">
        <title>Structure and regulation of the gene encoding the neuron-specific protein PEP-19.</title>
        <authorList>
            <person name="Sangameswaran L."/>
            <person name="Morgan J.I."/>
        </authorList>
    </citation>
    <scope>NUCLEOTIDE SEQUENCE [GENOMIC DNA]</scope>
</reference>
<reference key="3">
    <citation type="journal article" date="2004" name="Genome Res.">
        <title>The status, quality, and expansion of the NIH full-length cDNA project: the Mammalian Gene Collection (MGC).</title>
        <authorList>
            <consortium name="The MGC Project Team"/>
        </authorList>
    </citation>
    <scope>NUCLEOTIDE SEQUENCE [LARGE SCALE MRNA]</scope>
    <source>
        <tissue>Brain</tissue>
    </source>
</reference>
<proteinExistence type="inferred from homology"/>
<keyword id="KW-0106">Calcium</keyword>
<keyword id="KW-0112">Calmodulin-binding</keyword>
<keyword id="KW-1185">Reference proteome</keyword>
<gene>
    <name evidence="7" type="primary">Pcp4</name>
    <name type="synonym">Pep19</name>
</gene>